<comment type="function">
    <text evidence="1 6 10">Sulfurates the molybdenum cofactor (PubMed:34356852). Sulfation of molybdenum is essential for xanthine dehydrogenase (XDH) and aldehyde oxidase (ADO) enzymes in which molybdenum cofactor is liganded by 1 oxygen and 1 sulfur atom in active form (PubMed:34356852). In vitro, the C-terminal domain is able to reduce N-hydroxylated prodrugs, such as benzamidoxime (PubMed:16973608).</text>
</comment>
<comment type="catalytic activity">
    <reaction evidence="1 10">
        <text>Mo-molybdopterin + L-cysteine + AH2 = thio-Mo-molybdopterin + L-alanine + A + H2O</text>
        <dbReference type="Rhea" id="RHEA:42636"/>
        <dbReference type="ChEBI" id="CHEBI:13193"/>
        <dbReference type="ChEBI" id="CHEBI:15377"/>
        <dbReference type="ChEBI" id="CHEBI:17499"/>
        <dbReference type="ChEBI" id="CHEBI:35235"/>
        <dbReference type="ChEBI" id="CHEBI:57972"/>
        <dbReference type="ChEBI" id="CHEBI:71302"/>
        <dbReference type="ChEBI" id="CHEBI:82685"/>
        <dbReference type="EC" id="2.8.1.9"/>
    </reaction>
</comment>
<comment type="cofactor">
    <cofactor evidence="1 13">
        <name>pyridoxal 5'-phosphate</name>
        <dbReference type="ChEBI" id="CHEBI:597326"/>
    </cofactor>
</comment>
<comment type="biophysicochemical properties">
    <kinetics>
        <KM evidence="6">15 uM for benzamidoxime</KM>
        <Vmax evidence="6">0.24 nmol/min/mg enzyme</Vmax>
    </kinetics>
</comment>
<comment type="pathway">
    <text evidence="10">Cofactor biosynthesis; molybdopterin biosynthesis.</text>
</comment>
<comment type="interaction">
    <interactant intactId="EBI-1220583">
        <id>Q96EN8</id>
    </interactant>
    <interactant intactId="EBI-4401082">
        <id>Q96BM9</id>
        <label>ARL8A</label>
    </interactant>
    <organismsDiffer>false</organismsDiffer>
    <experiments>4</experiments>
</comment>
<comment type="interaction">
    <interactant intactId="EBI-1220583">
        <id>Q96EN8</id>
    </interactant>
    <interactant intactId="EBI-747655">
        <id>Q9NVD7</id>
        <label>PARVA</label>
    </interactant>
    <organismsDiffer>false</organismsDiffer>
    <experiments>6</experiments>
</comment>
<comment type="disease" evidence="2 3 7 9 10 11">
    <disease id="DI-01154">
        <name>Xanthinuria 2</name>
        <acronym>XAN2</acronym>
        <description>A disorder characterized by excretion of very large amounts of xanthine in the urine and a tendency to form xanthine stones. Uric acid is strikingly diminished in serum and urine. In addition, XAN2 patients cannot metabolize allopurinol into oxypurinol due to dual deficiency of xanthine dehydrogenase and aldehyde oxidase.</description>
        <dbReference type="MIM" id="603592"/>
    </disease>
    <text>The disease is caused by variants affecting the gene represented in this entry.</text>
</comment>
<comment type="similarity">
    <text evidence="1">Belongs to the class-V pyridoxal-phosphate-dependent aminotransferase family. MOCOS subfamily.</text>
</comment>
<reference key="1">
    <citation type="journal article" date="2001" name="Biochem. Biophys. Res. Commun.">
        <title>Mutation of human molybdenum cofactor sulfurase gene is responsible to classical xanthinuria type II.</title>
        <authorList>
            <person name="Ichida K."/>
            <person name="Matsumura T."/>
            <person name="Sakuma R."/>
            <person name="Hosoya T."/>
            <person name="Nishino T."/>
        </authorList>
    </citation>
    <scope>NUCLEOTIDE SEQUENCE [MRNA]</scope>
    <scope>INVOLVEMENT IN XAN2</scope>
    <scope>VARIANTS ARG-225 AND ASN-703</scope>
</reference>
<reference key="2">
    <citation type="journal article" date="2004" name="Nat. Genet.">
        <title>Complete sequencing and characterization of 21,243 full-length human cDNAs.</title>
        <authorList>
            <person name="Ota T."/>
            <person name="Suzuki Y."/>
            <person name="Nishikawa T."/>
            <person name="Otsuki T."/>
            <person name="Sugiyama T."/>
            <person name="Irie R."/>
            <person name="Wakamatsu A."/>
            <person name="Hayashi K."/>
            <person name="Sato H."/>
            <person name="Nagai K."/>
            <person name="Kimura K."/>
            <person name="Makita H."/>
            <person name="Sekine M."/>
            <person name="Obayashi M."/>
            <person name="Nishi T."/>
            <person name="Shibahara T."/>
            <person name="Tanaka T."/>
            <person name="Ishii S."/>
            <person name="Yamamoto J."/>
            <person name="Saito K."/>
            <person name="Kawai Y."/>
            <person name="Isono Y."/>
            <person name="Nakamura Y."/>
            <person name="Nagahari K."/>
            <person name="Murakami K."/>
            <person name="Yasuda T."/>
            <person name="Iwayanagi T."/>
            <person name="Wagatsuma M."/>
            <person name="Shiratori A."/>
            <person name="Sudo H."/>
            <person name="Hosoiri T."/>
            <person name="Kaku Y."/>
            <person name="Kodaira H."/>
            <person name="Kondo H."/>
            <person name="Sugawara M."/>
            <person name="Takahashi M."/>
            <person name="Kanda K."/>
            <person name="Yokoi T."/>
            <person name="Furuya T."/>
            <person name="Kikkawa E."/>
            <person name="Omura Y."/>
            <person name="Abe K."/>
            <person name="Kamihara K."/>
            <person name="Katsuta N."/>
            <person name="Sato K."/>
            <person name="Tanikawa M."/>
            <person name="Yamazaki M."/>
            <person name="Ninomiya K."/>
            <person name="Ishibashi T."/>
            <person name="Yamashita H."/>
            <person name="Murakawa K."/>
            <person name="Fujimori K."/>
            <person name="Tanai H."/>
            <person name="Kimata M."/>
            <person name="Watanabe M."/>
            <person name="Hiraoka S."/>
            <person name="Chiba Y."/>
            <person name="Ishida S."/>
            <person name="Ono Y."/>
            <person name="Takiguchi S."/>
            <person name="Watanabe S."/>
            <person name="Yosida M."/>
            <person name="Hotuta T."/>
            <person name="Kusano J."/>
            <person name="Kanehori K."/>
            <person name="Takahashi-Fujii A."/>
            <person name="Hara H."/>
            <person name="Tanase T.-O."/>
            <person name="Nomura Y."/>
            <person name="Togiya S."/>
            <person name="Komai F."/>
            <person name="Hara R."/>
            <person name="Takeuchi K."/>
            <person name="Arita M."/>
            <person name="Imose N."/>
            <person name="Musashino K."/>
            <person name="Yuuki H."/>
            <person name="Oshima A."/>
            <person name="Sasaki N."/>
            <person name="Aotsuka S."/>
            <person name="Yoshikawa Y."/>
            <person name="Matsunawa H."/>
            <person name="Ichihara T."/>
            <person name="Shiohata N."/>
            <person name="Sano S."/>
            <person name="Moriya S."/>
            <person name="Momiyama H."/>
            <person name="Satoh N."/>
            <person name="Takami S."/>
            <person name="Terashima Y."/>
            <person name="Suzuki O."/>
            <person name="Nakagawa S."/>
            <person name="Senoh A."/>
            <person name="Mizoguchi H."/>
            <person name="Goto Y."/>
            <person name="Shimizu F."/>
            <person name="Wakebe H."/>
            <person name="Hishigaki H."/>
            <person name="Watanabe T."/>
            <person name="Sugiyama A."/>
            <person name="Takemoto M."/>
            <person name="Kawakami B."/>
            <person name="Yamazaki M."/>
            <person name="Watanabe K."/>
            <person name="Kumagai A."/>
            <person name="Itakura S."/>
            <person name="Fukuzumi Y."/>
            <person name="Fujimori Y."/>
            <person name="Komiyama M."/>
            <person name="Tashiro H."/>
            <person name="Tanigami A."/>
            <person name="Fujiwara T."/>
            <person name="Ono T."/>
            <person name="Yamada K."/>
            <person name="Fujii Y."/>
            <person name="Ozaki K."/>
            <person name="Hirao M."/>
            <person name="Ohmori Y."/>
            <person name="Kawabata A."/>
            <person name="Hikiji T."/>
            <person name="Kobatake N."/>
            <person name="Inagaki H."/>
            <person name="Ikema Y."/>
            <person name="Okamoto S."/>
            <person name="Okitani R."/>
            <person name="Kawakami T."/>
            <person name="Noguchi S."/>
            <person name="Itoh T."/>
            <person name="Shigeta K."/>
            <person name="Senba T."/>
            <person name="Matsumura K."/>
            <person name="Nakajima Y."/>
            <person name="Mizuno T."/>
            <person name="Morinaga M."/>
            <person name="Sasaki M."/>
            <person name="Togashi T."/>
            <person name="Oyama M."/>
            <person name="Hata H."/>
            <person name="Watanabe M."/>
            <person name="Komatsu T."/>
            <person name="Mizushima-Sugano J."/>
            <person name="Satoh T."/>
            <person name="Shirai Y."/>
            <person name="Takahashi Y."/>
            <person name="Nakagawa K."/>
            <person name="Okumura K."/>
            <person name="Nagase T."/>
            <person name="Nomura N."/>
            <person name="Kikuchi H."/>
            <person name="Masuho Y."/>
            <person name="Yamashita R."/>
            <person name="Nakai K."/>
            <person name="Yada T."/>
            <person name="Nakamura Y."/>
            <person name="Ohara O."/>
            <person name="Isogai T."/>
            <person name="Sugano S."/>
        </authorList>
    </citation>
    <scope>NUCLEOTIDE SEQUENCE [LARGE SCALE MRNA]</scope>
    <scope>VARIANTS ILE-170; GLY-184; ARG-225; MET-358 AND ASN-703</scope>
    <source>
        <tissue>Liver</tissue>
    </source>
</reference>
<reference key="3">
    <citation type="journal article" date="2005" name="Nature">
        <title>DNA sequence and analysis of human chromosome 18.</title>
        <authorList>
            <person name="Nusbaum C."/>
            <person name="Zody M.C."/>
            <person name="Borowsky M.L."/>
            <person name="Kamal M."/>
            <person name="Kodira C.D."/>
            <person name="Taylor T.D."/>
            <person name="Whittaker C.A."/>
            <person name="Chang J.L."/>
            <person name="Cuomo C.A."/>
            <person name="Dewar K."/>
            <person name="FitzGerald M.G."/>
            <person name="Yang X."/>
            <person name="Abouelleil A."/>
            <person name="Allen N.R."/>
            <person name="Anderson S."/>
            <person name="Bloom T."/>
            <person name="Bugalter B."/>
            <person name="Butler J."/>
            <person name="Cook A."/>
            <person name="DeCaprio D."/>
            <person name="Engels R."/>
            <person name="Garber M."/>
            <person name="Gnirke A."/>
            <person name="Hafez N."/>
            <person name="Hall J.L."/>
            <person name="Norman C.H."/>
            <person name="Itoh T."/>
            <person name="Jaffe D.B."/>
            <person name="Kuroki Y."/>
            <person name="Lehoczky J."/>
            <person name="Lui A."/>
            <person name="Macdonald P."/>
            <person name="Mauceli E."/>
            <person name="Mikkelsen T.S."/>
            <person name="Naylor J.W."/>
            <person name="Nicol R."/>
            <person name="Nguyen C."/>
            <person name="Noguchi H."/>
            <person name="O'Leary S.B."/>
            <person name="Piqani B."/>
            <person name="Smith C.L."/>
            <person name="Talamas J.A."/>
            <person name="Topham K."/>
            <person name="Totoki Y."/>
            <person name="Toyoda A."/>
            <person name="Wain H.M."/>
            <person name="Young S.K."/>
            <person name="Zeng Q."/>
            <person name="Zimmer A.R."/>
            <person name="Fujiyama A."/>
            <person name="Hattori M."/>
            <person name="Birren B.W."/>
            <person name="Sakaki Y."/>
            <person name="Lander E.S."/>
        </authorList>
    </citation>
    <scope>NUCLEOTIDE SEQUENCE [LARGE SCALE GENOMIC DNA]</scope>
</reference>
<reference key="4">
    <citation type="journal article" date="2004" name="Genome Res.">
        <title>The status, quality, and expansion of the NIH full-length cDNA project: the Mammalian Gene Collection (MGC).</title>
        <authorList>
            <consortium name="The MGC Project Team"/>
        </authorList>
    </citation>
    <scope>NUCLEOTIDE SEQUENCE [LARGE SCALE MRNA]</scope>
    <scope>VARIANTS ILE-170; GLY-184; ARG-225 AND MET-358</scope>
    <source>
        <tissue>Lung</tissue>
    </source>
</reference>
<reference key="5">
    <citation type="journal article" date="2007" name="BMC Genomics">
        <title>The full-ORF clone resource of the German cDNA consortium.</title>
        <authorList>
            <person name="Bechtel S."/>
            <person name="Rosenfelder H."/>
            <person name="Duda A."/>
            <person name="Schmidt C.P."/>
            <person name="Ernst U."/>
            <person name="Wellenreuther R."/>
            <person name="Mehrle A."/>
            <person name="Schuster C."/>
            <person name="Bahr A."/>
            <person name="Bloecker H."/>
            <person name="Heubner D."/>
            <person name="Hoerlein A."/>
            <person name="Michel G."/>
            <person name="Wedler H."/>
            <person name="Koehrer K."/>
            <person name="Ottenwaelder B."/>
            <person name="Poustka A."/>
            <person name="Wiemann S."/>
            <person name="Schupp I."/>
        </authorList>
    </citation>
    <scope>NUCLEOTIDE SEQUENCE [LARGE SCALE MRNA] OF 95-888</scope>
    <scope>VARIANTS ILE-170 GLY-184; ARG-225 AND MET-358</scope>
    <source>
        <tissue>Melanoma</tissue>
    </source>
</reference>
<reference key="6">
    <citation type="journal article" date="2006" name="J. Biol. Chem.">
        <title>Identification of the missing component in the mitochondrial benzamidoxime prodrug converting system as a novel molybdenum enzyme.</title>
        <authorList>
            <person name="Havemeyer A."/>
            <person name="Bittner F."/>
            <person name="Wollers S."/>
            <person name="Mendel R."/>
            <person name="Kunze T."/>
            <person name="Clement B."/>
        </authorList>
    </citation>
    <scope>FUNCTION</scope>
    <scope>COFACTOR</scope>
    <scope>BIOPHYSICOCHEMICAL PROPERTIES</scope>
</reference>
<reference key="7">
    <citation type="journal article" date="2006" name="Nat. Biotechnol.">
        <title>A probability-based approach for high-throughput protein phosphorylation analysis and site localization.</title>
        <authorList>
            <person name="Beausoleil S.A."/>
            <person name="Villen J."/>
            <person name="Gerber S.A."/>
            <person name="Rush J."/>
            <person name="Gygi S.P."/>
        </authorList>
    </citation>
    <scope>PHOSPHORYLATION [LARGE SCALE ANALYSIS] AT SER-528 AND SER-530</scope>
    <scope>IDENTIFICATION BY MASS SPECTROMETRY [LARGE SCALE ANALYSIS]</scope>
    <source>
        <tissue>Cervix carcinoma</tissue>
    </source>
</reference>
<reference key="8">
    <citation type="journal article" date="2008" name="Proc. Natl. Acad. Sci. U.S.A.">
        <title>A quantitative atlas of mitotic phosphorylation.</title>
        <authorList>
            <person name="Dephoure N."/>
            <person name="Zhou C."/>
            <person name="Villen J."/>
            <person name="Beausoleil S.A."/>
            <person name="Bakalarski C.E."/>
            <person name="Elledge S.J."/>
            <person name="Gygi S.P."/>
        </authorList>
    </citation>
    <scope>PHOSPHORYLATION [LARGE SCALE ANALYSIS] AT SER-528 AND SER-530</scope>
    <scope>IDENTIFICATION BY MASS SPECTROMETRY [LARGE SCALE ANALYSIS]</scope>
    <source>
        <tissue>Cervix carcinoma</tissue>
    </source>
</reference>
<reference key="9">
    <citation type="journal article" date="2010" name="Sci. Signal.">
        <title>Quantitative phosphoproteomics reveals widespread full phosphorylation site occupancy during mitosis.</title>
        <authorList>
            <person name="Olsen J.V."/>
            <person name="Vermeulen M."/>
            <person name="Santamaria A."/>
            <person name="Kumar C."/>
            <person name="Miller M.L."/>
            <person name="Jensen L.J."/>
            <person name="Gnad F."/>
            <person name="Cox J."/>
            <person name="Jensen T.S."/>
            <person name="Nigg E.A."/>
            <person name="Brunak S."/>
            <person name="Mann M."/>
        </authorList>
    </citation>
    <scope>IDENTIFICATION BY MASS SPECTROMETRY [LARGE SCALE ANALYSIS]</scope>
    <source>
        <tissue>Cervix carcinoma</tissue>
    </source>
</reference>
<reference key="10">
    <citation type="journal article" date="2013" name="J. Proteome Res.">
        <title>Toward a comprehensive characterization of a human cancer cell phosphoproteome.</title>
        <authorList>
            <person name="Zhou H."/>
            <person name="Di Palma S."/>
            <person name="Preisinger C."/>
            <person name="Peng M."/>
            <person name="Polat A.N."/>
            <person name="Heck A.J."/>
            <person name="Mohammed S."/>
        </authorList>
    </citation>
    <scope>PHOSPHORYLATION [LARGE SCALE ANALYSIS] AT SER-34; SER-528 AND SER-530</scope>
    <scope>IDENTIFICATION BY MASS SPECTROMETRY [LARGE SCALE ANALYSIS]</scope>
    <source>
        <tissue>Cervix carcinoma</tissue>
        <tissue>Erythroleukemia</tissue>
    </source>
</reference>
<reference key="11">
    <citation type="journal article" date="2014" name="J. Proteomics">
        <title>An enzyme assisted RP-RPLC approach for in-depth analysis of human liver phosphoproteome.</title>
        <authorList>
            <person name="Bian Y."/>
            <person name="Song C."/>
            <person name="Cheng K."/>
            <person name="Dong M."/>
            <person name="Wang F."/>
            <person name="Huang J."/>
            <person name="Sun D."/>
            <person name="Wang L."/>
            <person name="Ye M."/>
            <person name="Zou H."/>
        </authorList>
    </citation>
    <scope>PHOSPHORYLATION [LARGE SCALE ANALYSIS] AT SER-34</scope>
    <scope>IDENTIFICATION BY MASS SPECTROMETRY [LARGE SCALE ANALYSIS]</scope>
    <source>
        <tissue>Liver</tissue>
    </source>
</reference>
<reference key="12">
    <citation type="journal article" date="2003" name="Clin. Chem. Lab. Med.">
        <title>Classical xanthinuria type 2 associated with a missense mutation in HMCS, the gene encoding molybdenum cofactor sulfurase.</title>
        <authorList>
            <person name="Finckh U."/>
            <person name="Haddad M."/>
            <person name="Lukacs Z."/>
            <person name="Wagener C."/>
            <person name="Gal A."/>
        </authorList>
    </citation>
    <scope>VARIANT XAN2 ILE-294</scope>
</reference>
<reference key="13">
    <citation type="journal article" date="2003" name="Metabolism">
        <title>Identification of a new point mutation in the human molybdenum cofactor sulferase gene that is responsible for xanthinuria type II.</title>
        <authorList>
            <person name="Yamamoto T."/>
            <person name="Moriwaki Y."/>
            <person name="Takahashi S."/>
            <person name="Tsutsumi Z."/>
            <person name="Tuneyoshi K."/>
            <person name="Matsui K."/>
            <person name="Cheng J."/>
            <person name="Hada T."/>
        </authorList>
    </citation>
    <scope>VARIANT XAN2 PRO-57</scope>
</reference>
<reference key="14">
    <citation type="journal article" date="2007" name="Mol. Genet. Metab.">
        <title>Identification and characterization of the first mutation (Arg776Cys) in the C-terminal domain of the human molybdenum cofactor sulfurase (HMCS) associated with type II classical xanthinuria.</title>
        <authorList>
            <person name="Peretz H."/>
            <person name="Naamati M.S."/>
            <person name="Levartovsky D."/>
            <person name="Lagziel A."/>
            <person name="Shani E."/>
            <person name="Horn I."/>
            <person name="Shalev H."/>
            <person name="Landau D."/>
        </authorList>
    </citation>
    <scope>VARIANT XAN2 CYS-776</scope>
</reference>
<reference key="15">
    <citation type="journal article" date="2018" name="Toxicol. Appl. Pharmacol.">
        <title>Thiopurine-induced toxicity is associated with dysfunction variant of the human molybdenum cofactor sulfurase gene (xanthinuria type II).</title>
        <authorList>
            <person name="Stiburkova B."/>
            <person name="Pavelcova K."/>
            <person name="Petru L."/>
            <person name="Krijt J."/>
        </authorList>
    </citation>
    <scope>VARIANT XAN2 MET-121</scope>
</reference>
<reference key="16">
    <citation type="journal article" date="2021" name="Biomedicines">
        <title>Classical Xanthinuria in Nine Israeli Families and Two Isolated Cases from Germany: Molecular, Biochemical and Population Genetics Aspects.</title>
        <authorList>
            <person name="Peretz H."/>
            <person name="Lagziel A."/>
            <person name="Bittner F."/>
            <person name="Kabha M."/>
            <person name="Shtauber-Naamati M."/>
            <person name="Zhuravel V."/>
            <person name="Usher S."/>
            <person name="Rump S."/>
            <person name="Wollers S."/>
            <person name="Bork B."/>
            <person name="Mandel H."/>
            <person name="Falik-Zaccai T."/>
            <person name="Kalfon L."/>
            <person name="Graessler J."/>
            <person name="Zeharia A."/>
            <person name="Heib N."/>
            <person name="Shalev H."/>
            <person name="Landau D."/>
            <person name="Levartovsky D."/>
        </authorList>
    </citation>
    <scope>VARIANTS XAN2 ILE-349; SER-591 AND CYS-776</scope>
    <scope>FUNCTION</scope>
    <scope>CATALYTIC ACTIVITY</scope>
    <scope>COFACTOR</scope>
    <scope>PATHWAY</scope>
</reference>
<proteinExistence type="evidence at protein level"/>
<sequence>MAGAAAESGRELWTFAGSRDPSAPRLAYGYGPGSLRELRAREFSRLAGTVYLDHAGATLFSQSQLESFTSDLMENTYGNPHSQNISSKLTHDTVEQVRYRILAHFHTTAEDYTVIFTAGSTAALKLVAEAFPWVSQGPESSGSRFCYLTDSHTSVVGMRNVTMAINVISTPVRPEDLWSAEERSASASNPDCQLPHLFCYPAQSNFSGVRYPLSWIEEVKSGRLHPVSTPGKWFVLLDAASYVSTSPLDLSAHQADFVPISFYKIFGFPTGLGALLVHNRAAPLLRKTYFGGGTASAYLAGEDFYIPRQSVAQRFEDGTISFLDVIALKHGFDTLERLTGGMENIKQHTFTLAQYTYVALSSLQYPNGAPVVRIYSDSEFSSPEVQGPIINFNVLDDKGNIIGYSQVDKMASLYNIHLRTGCFCNTGACQRHLGISNEMVRKHFQAGHVCGDNMDLIDGQPTGSVRISFGYMSTLDDVQAFLRFIIDTRLHSSGDWPVPQAHADTGETGAPSADSQADVIPAVMGRRSLSPQEDALTGSRVWNNSSTVNAVPVAPPVCDVARTQPTPSEKAAGVLEGALGPHVVTNLYLYPIKSCAAFEVTRWPVGNQGLLYDRSWMVVNHNGVCLSQKQEPRLCLIQPFIDLRQRIMVIKAKGMEPIEVPLEENSERTQIRQSRVCADRVSTYDCGEKISSWLSTFFGRPCHLIKQSSNSQRNAKKKHGKDQLPGTMATLSLVNEAQYLLINTSSILELHRQLNTSDENGKEELFSLKDLSLRFRANIIINGKRAFEEEKWDEISIGSLRFQVLGPCHRCQMICIDQQTGQRNQHVFQKLSESRETKVNFGMYLMHASLDLSSPCFLSVGSQVLPVLKENVEGHDLPASEKHQDVTS</sequence>
<name>MOCOS_HUMAN</name>
<accession>Q96EN8</accession>
<accession>Q53GP5</accession>
<accession>Q8N3A4</accession>
<accession>Q9NWM7</accession>
<keyword id="KW-0225">Disease variant</keyword>
<keyword id="KW-0501">Molybdenum cofactor biosynthesis</keyword>
<keyword id="KW-0597">Phosphoprotein</keyword>
<keyword id="KW-1267">Proteomics identification</keyword>
<keyword id="KW-0663">Pyridoxal phosphate</keyword>
<keyword id="KW-1185">Reference proteome</keyword>
<keyword id="KW-0808">Transferase</keyword>
<evidence type="ECO:0000255" key="1">
    <source>
        <dbReference type="HAMAP-Rule" id="MF_03050"/>
    </source>
</evidence>
<evidence type="ECO:0000269" key="2">
    <source>
    </source>
</evidence>
<evidence type="ECO:0000269" key="3">
    <source>
    </source>
</evidence>
<evidence type="ECO:0000269" key="4">
    <source>
    </source>
</evidence>
<evidence type="ECO:0000269" key="5">
    <source>
    </source>
</evidence>
<evidence type="ECO:0000269" key="6">
    <source>
    </source>
</evidence>
<evidence type="ECO:0000269" key="7">
    <source>
    </source>
</evidence>
<evidence type="ECO:0000269" key="8">
    <source>
    </source>
</evidence>
<evidence type="ECO:0000269" key="9">
    <source>
    </source>
</evidence>
<evidence type="ECO:0000269" key="10">
    <source>
    </source>
</evidence>
<evidence type="ECO:0000269" key="11">
    <source ref="12"/>
</evidence>
<evidence type="ECO:0000305" key="12"/>
<evidence type="ECO:0000305" key="13">
    <source>
    </source>
</evidence>
<evidence type="ECO:0007744" key="14">
    <source>
    </source>
</evidence>
<evidence type="ECO:0007744" key="15">
    <source>
    </source>
</evidence>
<evidence type="ECO:0007744" key="16">
    <source>
    </source>
</evidence>
<evidence type="ECO:0007744" key="17">
    <source>
    </source>
</evidence>
<organism>
    <name type="scientific">Homo sapiens</name>
    <name type="common">Human</name>
    <dbReference type="NCBI Taxonomy" id="9606"/>
    <lineage>
        <taxon>Eukaryota</taxon>
        <taxon>Metazoa</taxon>
        <taxon>Chordata</taxon>
        <taxon>Craniata</taxon>
        <taxon>Vertebrata</taxon>
        <taxon>Euteleostomi</taxon>
        <taxon>Mammalia</taxon>
        <taxon>Eutheria</taxon>
        <taxon>Euarchontoglires</taxon>
        <taxon>Primates</taxon>
        <taxon>Haplorrhini</taxon>
        <taxon>Catarrhini</taxon>
        <taxon>Hominidae</taxon>
        <taxon>Homo</taxon>
    </lineage>
</organism>
<protein>
    <recommendedName>
        <fullName evidence="1">Molybdenum cofactor sulfurase</fullName>
        <shortName evidence="1">MCS</shortName>
        <shortName evidence="1">MOS</shortName>
        <shortName evidence="1">MoCo sulfurase</shortName>
        <shortName>hMCS</shortName>
        <ecNumber evidence="1 10">2.8.1.9</ecNumber>
    </recommendedName>
    <alternativeName>
        <fullName evidence="1">Molybdenum cofactor sulfurtransferase</fullName>
    </alternativeName>
</protein>
<gene>
    <name evidence="1" type="primary">MOCOS</name>
</gene>
<feature type="chain" id="PRO_0000249952" description="Molybdenum cofactor sulfurase">
    <location>
        <begin position="1"/>
        <end position="888"/>
    </location>
</feature>
<feature type="domain" description="MOSC" evidence="1">
    <location>
        <begin position="706"/>
        <end position="867"/>
    </location>
</feature>
<feature type="active site" evidence="1">
    <location>
        <position position="424"/>
    </location>
</feature>
<feature type="modified residue" description="Phosphoserine" evidence="16 17">
    <location>
        <position position="34"/>
    </location>
</feature>
<feature type="modified residue" description="N6-(pyridoxal phosphate)lysine" evidence="1">
    <location>
        <position position="264"/>
    </location>
</feature>
<feature type="modified residue" description="Phosphoserine" evidence="14 15 16">
    <location>
        <position position="528"/>
    </location>
</feature>
<feature type="modified residue" description="Phosphoserine" evidence="14 15 16">
    <location>
        <position position="530"/>
    </location>
</feature>
<feature type="sequence variant" id="VAR_027528" description="In XAN2; dbSNP:rs886037854." evidence="3">
    <original>A</original>
    <variation>P</variation>
    <location>
        <position position="57"/>
    </location>
</feature>
<feature type="sequence variant" id="VAR_027529" description="In dbSNP:rs3744900.">
    <original>S</original>
    <variation>N</variation>
    <location>
        <position position="120"/>
    </location>
</feature>
<feature type="sequence variant" id="VAR_090462" description="In XAN2; uncertain significance; dbSNP:rs770229881." evidence="9">
    <original>T</original>
    <variation>M</variation>
    <location>
        <position position="121"/>
    </location>
</feature>
<feature type="sequence variant" id="VAR_027530" description="In dbSNP:rs623053." evidence="4 5">
    <original>T</original>
    <variation>I</variation>
    <location>
        <position position="170"/>
    </location>
</feature>
<feature type="sequence variant" id="VAR_027531" description="In dbSNP:rs540967." evidence="4 5 8">
    <original>S</original>
    <variation>G</variation>
    <location>
        <position position="184"/>
    </location>
</feature>
<feature type="sequence variant" id="VAR_027532" description="In dbSNP:rs623558." evidence="2 4 5 8">
    <original>H</original>
    <variation>R</variation>
    <location>
        <position position="225"/>
    </location>
</feature>
<feature type="sequence variant" id="VAR_027533" description="In XAN2; dbSNP:rs577279030." evidence="11">
    <original>T</original>
    <variation>I</variation>
    <location>
        <position position="294"/>
    </location>
</feature>
<feature type="sequence variant" id="VAR_090463" description="In XAN2; abolishes enzyme activity; impairs pyridoxal 5'-phosphate binding." evidence="10">
    <original>T</original>
    <variation>I</variation>
    <location>
        <position position="349"/>
    </location>
</feature>
<feature type="sequence variant" id="VAR_027534" description="In dbSNP:rs678560." evidence="4 5 8">
    <original>V</original>
    <variation>M</variation>
    <location>
        <position position="358"/>
    </location>
</feature>
<feature type="sequence variant" id="VAR_027535" description="In dbSNP:rs8088347.">
    <original>D</original>
    <variation>N</variation>
    <location>
        <position position="495"/>
    </location>
</feature>
<feature type="sequence variant" id="VAR_027536" description="In dbSNP:rs672924.">
    <original>V</original>
    <variation>L</variation>
    <location>
        <position position="541"/>
    </location>
</feature>
<feature type="sequence variant" id="VAR_090464" description="In XAN2; impairs Mo-molybdopterin cofactor binding; dbSNP:rs1368233320." evidence="10">
    <original>P</original>
    <variation>S</variation>
    <location>
        <position position="591"/>
    </location>
</feature>
<feature type="sequence variant" id="VAR_027537" description="In dbSNP:rs594445." evidence="2 4">
    <original>H</original>
    <variation>N</variation>
    <location>
        <position position="703"/>
    </location>
</feature>
<feature type="sequence variant" id="VAR_045899" description="In XAN2; impairs Mo-molybdopterin cofactor binding; dbSNP:rs750896617." evidence="7 10">
    <original>R</original>
    <variation>C</variation>
    <location>
        <position position="776"/>
    </location>
</feature>
<feature type="sequence variant" id="VAR_027538" description="In dbSNP:rs1057251.">
    <original>V</original>
    <variation>A</variation>
    <location>
        <position position="867"/>
    </location>
</feature>
<feature type="sequence conflict" description="In Ref. 2; BAD96606." evidence="12" ref="2">
    <original>G</original>
    <variation>E</variation>
    <location>
        <position position="119"/>
    </location>
</feature>
<feature type="sequence conflict" description="In Ref. 2; BAD96606." evidence="12" ref="2">
    <original>K</original>
    <variation>E</variation>
    <location>
        <position position="689"/>
    </location>
</feature>
<dbReference type="EC" id="2.8.1.9" evidence="1 10"/>
<dbReference type="EMBL" id="AK000740">
    <property type="protein sequence ID" value="BAA91353.1"/>
    <property type="molecule type" value="mRNA"/>
</dbReference>
<dbReference type="EMBL" id="AK222886">
    <property type="protein sequence ID" value="BAD96606.1"/>
    <property type="molecule type" value="mRNA"/>
</dbReference>
<dbReference type="EMBL" id="AC023043">
    <property type="status" value="NOT_ANNOTATED_CDS"/>
    <property type="molecule type" value="Genomic_DNA"/>
</dbReference>
<dbReference type="EMBL" id="BC012079">
    <property type="protein sequence ID" value="AAH12079.1"/>
    <property type="molecule type" value="mRNA"/>
</dbReference>
<dbReference type="EMBL" id="AL834481">
    <property type="protein sequence ID" value="CAD39140.1"/>
    <property type="molecule type" value="mRNA"/>
</dbReference>
<dbReference type="CCDS" id="CCDS11919.1"/>
<dbReference type="PIR" id="JC7680">
    <property type="entry name" value="JC7680"/>
</dbReference>
<dbReference type="RefSeq" id="NP_060417.4">
    <property type="nucleotide sequence ID" value="NM_017947.4"/>
</dbReference>
<dbReference type="SMR" id="Q96EN8"/>
<dbReference type="BioGRID" id="120363">
    <property type="interactions" value="42"/>
</dbReference>
<dbReference type="FunCoup" id="Q96EN8">
    <property type="interactions" value="436"/>
</dbReference>
<dbReference type="IntAct" id="Q96EN8">
    <property type="interactions" value="36"/>
</dbReference>
<dbReference type="MINT" id="Q96EN8"/>
<dbReference type="STRING" id="9606.ENSP00000261326"/>
<dbReference type="DrugBank" id="DB00114">
    <property type="generic name" value="Pyridoxal phosphate"/>
</dbReference>
<dbReference type="GlyGen" id="Q96EN8">
    <property type="glycosylation" value="2 sites, 1 O-linked glycan (1 site)"/>
</dbReference>
<dbReference type="iPTMnet" id="Q96EN8"/>
<dbReference type="PhosphoSitePlus" id="Q96EN8"/>
<dbReference type="BioMuta" id="MOCOS"/>
<dbReference type="DMDM" id="296438294"/>
<dbReference type="CPTAC" id="CPTAC-979"/>
<dbReference type="jPOST" id="Q96EN8"/>
<dbReference type="MassIVE" id="Q96EN8"/>
<dbReference type="PaxDb" id="9606-ENSP00000261326"/>
<dbReference type="PeptideAtlas" id="Q96EN8"/>
<dbReference type="ProteomicsDB" id="76426"/>
<dbReference type="Pumba" id="Q96EN8"/>
<dbReference type="Antibodypedia" id="41960">
    <property type="antibodies" value="49 antibodies from 18 providers"/>
</dbReference>
<dbReference type="DNASU" id="55034"/>
<dbReference type="Ensembl" id="ENST00000261326.6">
    <property type="protein sequence ID" value="ENSP00000261326.4"/>
    <property type="gene ID" value="ENSG00000075643.6"/>
</dbReference>
<dbReference type="GeneID" id="55034"/>
<dbReference type="KEGG" id="hsa:55034"/>
<dbReference type="MANE-Select" id="ENST00000261326.6">
    <property type="protein sequence ID" value="ENSP00000261326.4"/>
    <property type="RefSeq nucleotide sequence ID" value="NM_017947.4"/>
    <property type="RefSeq protein sequence ID" value="NP_060417.4"/>
</dbReference>
<dbReference type="UCSC" id="uc002kzq.5">
    <property type="organism name" value="human"/>
</dbReference>
<dbReference type="AGR" id="HGNC:18234"/>
<dbReference type="CTD" id="55034"/>
<dbReference type="DisGeNET" id="55034"/>
<dbReference type="GeneCards" id="MOCOS"/>
<dbReference type="HGNC" id="HGNC:18234">
    <property type="gene designation" value="MOCOS"/>
</dbReference>
<dbReference type="HPA" id="ENSG00000075643">
    <property type="expression patterns" value="Tissue enhanced (adrenal gland, liver)"/>
</dbReference>
<dbReference type="MalaCards" id="MOCOS"/>
<dbReference type="MIM" id="603592">
    <property type="type" value="phenotype"/>
</dbReference>
<dbReference type="MIM" id="613274">
    <property type="type" value="gene"/>
</dbReference>
<dbReference type="neXtProt" id="NX_Q96EN8"/>
<dbReference type="OpenTargets" id="ENSG00000075643"/>
<dbReference type="Orphanet" id="93602">
    <property type="disease" value="Xanthinuria type II"/>
</dbReference>
<dbReference type="PharmGKB" id="PA134964534"/>
<dbReference type="VEuPathDB" id="HostDB:ENSG00000075643"/>
<dbReference type="eggNOG" id="KOG2142">
    <property type="taxonomic scope" value="Eukaryota"/>
</dbReference>
<dbReference type="GeneTree" id="ENSGT00940000157051"/>
<dbReference type="HOGENOM" id="CLU_010913_0_1_1"/>
<dbReference type="InParanoid" id="Q96EN8"/>
<dbReference type="OMA" id="PCTRCQM"/>
<dbReference type="OrthoDB" id="420046at2759"/>
<dbReference type="PAN-GO" id="Q96EN8">
    <property type="GO annotations" value="2 GO annotations based on evolutionary models"/>
</dbReference>
<dbReference type="PhylomeDB" id="Q96EN8"/>
<dbReference type="TreeFam" id="TF105761"/>
<dbReference type="PathwayCommons" id="Q96EN8"/>
<dbReference type="Reactome" id="R-HSA-947581">
    <property type="pathway name" value="Molybdenum cofactor biosynthesis"/>
</dbReference>
<dbReference type="SABIO-RK" id="Q96EN8"/>
<dbReference type="SignaLink" id="Q96EN8"/>
<dbReference type="UniPathway" id="UPA00344"/>
<dbReference type="BioGRID-ORCS" id="55034">
    <property type="hits" value="9 hits in 1157 CRISPR screens"/>
</dbReference>
<dbReference type="ChiTaRS" id="MOCOS">
    <property type="organism name" value="human"/>
</dbReference>
<dbReference type="GeneWiki" id="MOCOS"/>
<dbReference type="GenomeRNAi" id="55034"/>
<dbReference type="Pharos" id="Q96EN8">
    <property type="development level" value="Tbio"/>
</dbReference>
<dbReference type="PRO" id="PR:Q96EN8"/>
<dbReference type="Proteomes" id="UP000005640">
    <property type="component" value="Chromosome 18"/>
</dbReference>
<dbReference type="RNAct" id="Q96EN8">
    <property type="molecule type" value="protein"/>
</dbReference>
<dbReference type="Bgee" id="ENSG00000075643">
    <property type="expression patterns" value="Expressed in secondary oocyte and 122 other cell types or tissues"/>
</dbReference>
<dbReference type="GO" id="GO:0005829">
    <property type="term" value="C:cytosol"/>
    <property type="evidence" value="ECO:0000304"/>
    <property type="project" value="Reactome"/>
</dbReference>
<dbReference type="GO" id="GO:0016829">
    <property type="term" value="F:lyase activity"/>
    <property type="evidence" value="ECO:0007669"/>
    <property type="project" value="UniProtKB-UniRule"/>
</dbReference>
<dbReference type="GO" id="GO:0008265">
    <property type="term" value="F:molybdenum cofactor sulfurtransferase activity"/>
    <property type="evidence" value="ECO:0000315"/>
    <property type="project" value="UniProtKB"/>
</dbReference>
<dbReference type="GO" id="GO:0030151">
    <property type="term" value="F:molybdenum ion binding"/>
    <property type="evidence" value="ECO:0007669"/>
    <property type="project" value="UniProtKB-UniRule"/>
</dbReference>
<dbReference type="GO" id="GO:0030170">
    <property type="term" value="F:pyridoxal phosphate binding"/>
    <property type="evidence" value="ECO:0007669"/>
    <property type="project" value="UniProtKB-UniRule"/>
</dbReference>
<dbReference type="GO" id="GO:0006777">
    <property type="term" value="P:Mo-molybdopterin cofactor biosynthetic process"/>
    <property type="evidence" value="ECO:0007669"/>
    <property type="project" value="UniProtKB-UniRule"/>
</dbReference>
<dbReference type="GO" id="GO:0032324">
    <property type="term" value="P:molybdopterin cofactor biosynthetic process"/>
    <property type="evidence" value="ECO:0000304"/>
    <property type="project" value="Reactome"/>
</dbReference>
<dbReference type="GO" id="GO:0043545">
    <property type="term" value="P:molybdopterin cofactor metabolic process"/>
    <property type="evidence" value="ECO:0000315"/>
    <property type="project" value="UniProtKB"/>
</dbReference>
<dbReference type="FunFam" id="3.40.640.10:FF:000096">
    <property type="entry name" value="Molybdenum cofactor sulfurase"/>
    <property type="match status" value="1"/>
</dbReference>
<dbReference type="Gene3D" id="3.40.640.10">
    <property type="entry name" value="Type I PLP-dependent aspartate aminotransferase-like (Major domain)"/>
    <property type="match status" value="1"/>
</dbReference>
<dbReference type="HAMAP" id="MF_03050">
    <property type="entry name" value="MOCOS"/>
    <property type="match status" value="1"/>
</dbReference>
<dbReference type="InterPro" id="IPR000192">
    <property type="entry name" value="Aminotrans_V_dom"/>
</dbReference>
<dbReference type="InterPro" id="IPR005302">
    <property type="entry name" value="MoCF_Sase_C"/>
</dbReference>
<dbReference type="InterPro" id="IPR028886">
    <property type="entry name" value="MoCo_sulfurase"/>
</dbReference>
<dbReference type="InterPro" id="IPR005303">
    <property type="entry name" value="MOCOS_middle"/>
</dbReference>
<dbReference type="InterPro" id="IPR015424">
    <property type="entry name" value="PyrdxlP-dep_Trfase"/>
</dbReference>
<dbReference type="InterPro" id="IPR015421">
    <property type="entry name" value="PyrdxlP-dep_Trfase_major"/>
</dbReference>
<dbReference type="InterPro" id="IPR011037">
    <property type="entry name" value="Pyrv_Knase-like_insert_dom_sf"/>
</dbReference>
<dbReference type="PANTHER" id="PTHR14237:SF19">
    <property type="entry name" value="MITOCHONDRIAL AMIDOXIME REDUCING COMPONENT 1"/>
    <property type="match status" value="1"/>
</dbReference>
<dbReference type="PANTHER" id="PTHR14237">
    <property type="entry name" value="MOLYBDOPTERIN COFACTOR SULFURASE MOSC"/>
    <property type="match status" value="1"/>
</dbReference>
<dbReference type="Pfam" id="PF00266">
    <property type="entry name" value="Aminotran_5"/>
    <property type="match status" value="1"/>
</dbReference>
<dbReference type="Pfam" id="PF03473">
    <property type="entry name" value="MOSC"/>
    <property type="match status" value="1"/>
</dbReference>
<dbReference type="Pfam" id="PF03476">
    <property type="entry name" value="MOSC_N"/>
    <property type="match status" value="1"/>
</dbReference>
<dbReference type="SUPFAM" id="SSF141673">
    <property type="entry name" value="MOSC N-terminal domain-like"/>
    <property type="match status" value="1"/>
</dbReference>
<dbReference type="SUPFAM" id="SSF50800">
    <property type="entry name" value="PK beta-barrel domain-like"/>
    <property type="match status" value="1"/>
</dbReference>
<dbReference type="SUPFAM" id="SSF53383">
    <property type="entry name" value="PLP-dependent transferases"/>
    <property type="match status" value="1"/>
</dbReference>
<dbReference type="PROSITE" id="PS51340">
    <property type="entry name" value="MOSC"/>
    <property type="match status" value="1"/>
</dbReference>